<name>PSBH_POPAL</name>
<geneLocation type="chloroplast"/>
<sequence length="73" mass="7730">MATQSVEGSSRSGPRRTIVGDLLKPLNSEYGKVAPGWGTTPLMGVAMALFAVFLSIILEIYNSSVLLDGISMN</sequence>
<gene>
    <name evidence="2" type="primary">psbH</name>
</gene>
<accession>Q14FC8</accession>
<reference key="1">
    <citation type="submission" date="2005-03" db="EMBL/GenBank/DDBJ databases">
        <title>Complete structure of the chloroplast genome of Populus alba.</title>
        <authorList>
            <person name="Okumura S."/>
            <person name="Yamashita A."/>
            <person name="Kanamoto H."/>
            <person name="Hattori M."/>
            <person name="Takase H."/>
            <person name="Tomizawa K."/>
        </authorList>
    </citation>
    <scope>NUCLEOTIDE SEQUENCE [LARGE SCALE GENOMIC DNA]</scope>
</reference>
<feature type="initiator methionine" description="Removed" evidence="1">
    <location>
        <position position="1"/>
    </location>
</feature>
<feature type="chain" id="PRO_0000275769" description="Photosystem II reaction center protein H">
    <location>
        <begin position="2"/>
        <end position="73"/>
    </location>
</feature>
<feature type="transmembrane region" description="Helical" evidence="2">
    <location>
        <begin position="41"/>
        <end position="61"/>
    </location>
</feature>
<feature type="modified residue" description="Phosphothreonine" evidence="2">
    <location>
        <position position="3"/>
    </location>
</feature>
<evidence type="ECO:0000250" key="1">
    <source>
        <dbReference type="UniProtKB" id="P56780"/>
    </source>
</evidence>
<evidence type="ECO:0000255" key="2">
    <source>
        <dbReference type="HAMAP-Rule" id="MF_00752"/>
    </source>
</evidence>
<dbReference type="EMBL" id="AP008956">
    <property type="protein sequence ID" value="BAE97234.1"/>
    <property type="molecule type" value="Genomic_DNA"/>
</dbReference>
<dbReference type="RefSeq" id="YP_665587.1">
    <property type="nucleotide sequence ID" value="NC_008235.1"/>
</dbReference>
<dbReference type="SMR" id="Q14FC8"/>
<dbReference type="GeneID" id="4178164"/>
<dbReference type="KEGG" id="palz:4178164"/>
<dbReference type="OrthoDB" id="5152at3646"/>
<dbReference type="GO" id="GO:0009535">
    <property type="term" value="C:chloroplast thylakoid membrane"/>
    <property type="evidence" value="ECO:0007669"/>
    <property type="project" value="UniProtKB-SubCell"/>
</dbReference>
<dbReference type="GO" id="GO:0009523">
    <property type="term" value="C:photosystem II"/>
    <property type="evidence" value="ECO:0007669"/>
    <property type="project" value="UniProtKB-KW"/>
</dbReference>
<dbReference type="GO" id="GO:0042301">
    <property type="term" value="F:phosphate ion binding"/>
    <property type="evidence" value="ECO:0007669"/>
    <property type="project" value="InterPro"/>
</dbReference>
<dbReference type="GO" id="GO:0015979">
    <property type="term" value="P:photosynthesis"/>
    <property type="evidence" value="ECO:0007669"/>
    <property type="project" value="UniProtKB-UniRule"/>
</dbReference>
<dbReference type="GO" id="GO:0050821">
    <property type="term" value="P:protein stabilization"/>
    <property type="evidence" value="ECO:0007669"/>
    <property type="project" value="InterPro"/>
</dbReference>
<dbReference type="FunFam" id="1.20.5.880:FF:000001">
    <property type="entry name" value="Photosystem II reaction center protein H"/>
    <property type="match status" value="1"/>
</dbReference>
<dbReference type="Gene3D" id="1.20.5.880">
    <property type="entry name" value="Photosystem II reaction center protein H"/>
    <property type="match status" value="1"/>
</dbReference>
<dbReference type="HAMAP" id="MF_00752">
    <property type="entry name" value="PSII_PsbH"/>
    <property type="match status" value="1"/>
</dbReference>
<dbReference type="InterPro" id="IPR001056">
    <property type="entry name" value="PSII_PsbH"/>
</dbReference>
<dbReference type="InterPro" id="IPR036863">
    <property type="entry name" value="PSII_PsbH_sf"/>
</dbReference>
<dbReference type="NCBIfam" id="NF002728">
    <property type="entry name" value="PRK02624.1"/>
    <property type="match status" value="1"/>
</dbReference>
<dbReference type="PANTHER" id="PTHR34469">
    <property type="entry name" value="PHOTOSYSTEM II REACTION CENTER PROTEIN H"/>
    <property type="match status" value="1"/>
</dbReference>
<dbReference type="PANTHER" id="PTHR34469:SF4">
    <property type="entry name" value="PHOTOSYSTEM II REACTION CENTER PROTEIN H"/>
    <property type="match status" value="1"/>
</dbReference>
<dbReference type="Pfam" id="PF00737">
    <property type="entry name" value="PsbH"/>
    <property type="match status" value="1"/>
</dbReference>
<dbReference type="SUPFAM" id="SSF161025">
    <property type="entry name" value="Photosystem II 10 kDa phosphoprotein PsbH"/>
    <property type="match status" value="1"/>
</dbReference>
<keyword id="KW-0150">Chloroplast</keyword>
<keyword id="KW-0472">Membrane</keyword>
<keyword id="KW-0597">Phosphoprotein</keyword>
<keyword id="KW-0602">Photosynthesis</keyword>
<keyword id="KW-0604">Photosystem II</keyword>
<keyword id="KW-0934">Plastid</keyword>
<keyword id="KW-0793">Thylakoid</keyword>
<keyword id="KW-0812">Transmembrane</keyword>
<keyword id="KW-1133">Transmembrane helix</keyword>
<proteinExistence type="inferred from homology"/>
<organism>
    <name type="scientific">Populus alba</name>
    <name type="common">White poplar</name>
    <dbReference type="NCBI Taxonomy" id="43335"/>
    <lineage>
        <taxon>Eukaryota</taxon>
        <taxon>Viridiplantae</taxon>
        <taxon>Streptophyta</taxon>
        <taxon>Embryophyta</taxon>
        <taxon>Tracheophyta</taxon>
        <taxon>Spermatophyta</taxon>
        <taxon>Magnoliopsida</taxon>
        <taxon>eudicotyledons</taxon>
        <taxon>Gunneridae</taxon>
        <taxon>Pentapetalae</taxon>
        <taxon>rosids</taxon>
        <taxon>fabids</taxon>
        <taxon>Malpighiales</taxon>
        <taxon>Salicaceae</taxon>
        <taxon>Saliceae</taxon>
        <taxon>Populus</taxon>
    </lineage>
</organism>
<comment type="function">
    <text evidence="2">One of the components of the core complex of photosystem II (PSII), required for its stability and/or assembly. PSII is a light-driven water:plastoquinone oxidoreductase that uses light energy to abstract electrons from H(2)O, generating O(2) and a proton gradient subsequently used for ATP formation. It consists of a core antenna complex that captures photons, and an electron transfer chain that converts photonic excitation into a charge separation.</text>
</comment>
<comment type="subunit">
    <text evidence="2">PSII is composed of 1 copy each of membrane proteins PsbA, PsbB, PsbC, PsbD, PsbE, PsbF, PsbH, PsbI, PsbJ, PsbK, PsbL, PsbM, PsbT, PsbX, PsbY, PsbZ, Psb30/Ycf12, at least 3 peripheral proteins of the oxygen-evolving complex and a large number of cofactors. It forms dimeric complexes.</text>
</comment>
<comment type="subcellular location">
    <subcellularLocation>
        <location evidence="2">Plastid</location>
        <location evidence="2">Chloroplast thylakoid membrane</location>
        <topology evidence="2">Single-pass membrane protein</topology>
    </subcellularLocation>
</comment>
<comment type="PTM">
    <text evidence="2">Phosphorylation is a light-dependent reaction catalyzed by a membrane-bound kinase; phosphorylation occurs on Thr residue(s) in the N-terminus of the protein.</text>
</comment>
<comment type="similarity">
    <text evidence="2">Belongs to the PsbH family.</text>
</comment>
<protein>
    <recommendedName>
        <fullName evidence="2">Photosystem II reaction center protein H</fullName>
        <shortName evidence="2">PSII-H</shortName>
    </recommendedName>
    <alternativeName>
        <fullName evidence="2">Photosystem II 10 kDa phosphoprotein</fullName>
    </alternativeName>
</protein>